<dbReference type="EC" id="2.7.1.2" evidence="6"/>
<dbReference type="EMBL" id="M24077">
    <property type="protein sequence ID" value="AAA53536.1"/>
    <property type="molecule type" value="Genomic_DNA"/>
</dbReference>
<dbReference type="EMBL" id="X59720">
    <property type="protein sequence ID" value="CAA42376.1"/>
    <property type="molecule type" value="Genomic_DNA"/>
</dbReference>
<dbReference type="EMBL" id="BK006937">
    <property type="protein sequence ID" value="DAA07444.1"/>
    <property type="molecule type" value="Genomic_DNA"/>
</dbReference>
<dbReference type="PIR" id="JT0482">
    <property type="entry name" value="JT0482"/>
</dbReference>
<dbReference type="RefSeq" id="NP_009890.1">
    <property type="nucleotide sequence ID" value="NM_001178685.1"/>
</dbReference>
<dbReference type="PDB" id="6P4X">
    <property type="method" value="X-ray"/>
    <property type="resolution" value="3.59 A"/>
    <property type="chains" value="A/B/C/D/E/F=1-500"/>
</dbReference>
<dbReference type="PDB" id="6PDT">
    <property type="method" value="EM"/>
    <property type="resolution" value="3.80 A"/>
    <property type="chains" value="A/B/C/D=1-500"/>
</dbReference>
<dbReference type="PDBsum" id="6P4X"/>
<dbReference type="PDBsum" id="6PDT"/>
<dbReference type="EMDB" id="EMD-20309"/>
<dbReference type="SMR" id="P17709"/>
<dbReference type="BioGRID" id="30943">
    <property type="interactions" value="80"/>
</dbReference>
<dbReference type="DIP" id="DIP-525N"/>
<dbReference type="FunCoup" id="P17709">
    <property type="interactions" value="1382"/>
</dbReference>
<dbReference type="IntAct" id="P17709">
    <property type="interactions" value="58"/>
</dbReference>
<dbReference type="MINT" id="P17709"/>
<dbReference type="STRING" id="4932.YCL040W"/>
<dbReference type="iPTMnet" id="P17709"/>
<dbReference type="PaxDb" id="4932-YCL040W"/>
<dbReference type="PeptideAtlas" id="P17709"/>
<dbReference type="EnsemblFungi" id="YCL040W_mRNA">
    <property type="protein sequence ID" value="YCL040W"/>
    <property type="gene ID" value="YCL040W"/>
</dbReference>
<dbReference type="GeneID" id="850317"/>
<dbReference type="KEGG" id="sce:YCL040W"/>
<dbReference type="AGR" id="SGD:S000000545"/>
<dbReference type="SGD" id="S000000545">
    <property type="gene designation" value="GLK1"/>
</dbReference>
<dbReference type="VEuPathDB" id="FungiDB:YCL040W"/>
<dbReference type="eggNOG" id="KOG1369">
    <property type="taxonomic scope" value="Eukaryota"/>
</dbReference>
<dbReference type="GeneTree" id="ENSGT00950000182787"/>
<dbReference type="HOGENOM" id="CLU_014393_5_0_1"/>
<dbReference type="InParanoid" id="P17709"/>
<dbReference type="OMA" id="YPNFEGY"/>
<dbReference type="OrthoDB" id="419537at2759"/>
<dbReference type="BioCyc" id="MetaCyc:YCL040W-MONOMER"/>
<dbReference type="BioCyc" id="YEAST:YCL040W-MONOMER"/>
<dbReference type="BRENDA" id="2.7.1.2">
    <property type="organism ID" value="984"/>
</dbReference>
<dbReference type="Reactome" id="R-SCE-170822">
    <property type="pathway name" value="Regulation of Glucokinase by Glucokinase Regulatory Protein"/>
</dbReference>
<dbReference type="Reactome" id="R-SCE-446205">
    <property type="pathway name" value="Synthesis of GDP-mannose"/>
</dbReference>
<dbReference type="Reactome" id="R-SCE-6798695">
    <property type="pathway name" value="Neutrophil degranulation"/>
</dbReference>
<dbReference type="Reactome" id="R-SCE-70171">
    <property type="pathway name" value="Glycolysis"/>
</dbReference>
<dbReference type="SABIO-RK" id="P17709"/>
<dbReference type="UniPathway" id="UPA00109">
    <property type="reaction ID" value="UER00180"/>
</dbReference>
<dbReference type="UniPathway" id="UPA00242"/>
<dbReference type="BioGRID-ORCS" id="850317">
    <property type="hits" value="6 hits in 10 CRISPR screens"/>
</dbReference>
<dbReference type="PRO" id="PR:P17709"/>
<dbReference type="Proteomes" id="UP000002311">
    <property type="component" value="Chromosome III"/>
</dbReference>
<dbReference type="RNAct" id="P17709">
    <property type="molecule type" value="protein"/>
</dbReference>
<dbReference type="GO" id="GO:0005829">
    <property type="term" value="C:cytosol"/>
    <property type="evidence" value="ECO:0007005"/>
    <property type="project" value="SGD"/>
</dbReference>
<dbReference type="GO" id="GO:0005739">
    <property type="term" value="C:mitochondrion"/>
    <property type="evidence" value="ECO:0000318"/>
    <property type="project" value="GO_Central"/>
</dbReference>
<dbReference type="GO" id="GO:0005886">
    <property type="term" value="C:plasma membrane"/>
    <property type="evidence" value="ECO:0007005"/>
    <property type="project" value="SGD"/>
</dbReference>
<dbReference type="GO" id="GO:0005524">
    <property type="term" value="F:ATP binding"/>
    <property type="evidence" value="ECO:0007669"/>
    <property type="project" value="UniProtKB-KW"/>
</dbReference>
<dbReference type="GO" id="GO:0005536">
    <property type="term" value="F:D-glucose binding"/>
    <property type="evidence" value="ECO:0007669"/>
    <property type="project" value="InterPro"/>
</dbReference>
<dbReference type="GO" id="GO:0008865">
    <property type="term" value="F:fructokinase activity"/>
    <property type="evidence" value="ECO:0000318"/>
    <property type="project" value="GO_Central"/>
</dbReference>
<dbReference type="GO" id="GO:0004340">
    <property type="term" value="F:glucokinase activity"/>
    <property type="evidence" value="ECO:0000314"/>
    <property type="project" value="SGD"/>
</dbReference>
<dbReference type="GO" id="GO:0046323">
    <property type="term" value="P:D-glucose import"/>
    <property type="evidence" value="ECO:0000316"/>
    <property type="project" value="SGD"/>
</dbReference>
<dbReference type="GO" id="GO:0051156">
    <property type="term" value="P:glucose 6-phosphate metabolic process"/>
    <property type="evidence" value="ECO:0000318"/>
    <property type="project" value="GO_Central"/>
</dbReference>
<dbReference type="GO" id="GO:0006006">
    <property type="term" value="P:glucose metabolic process"/>
    <property type="evidence" value="ECO:0000315"/>
    <property type="project" value="SGD"/>
</dbReference>
<dbReference type="GO" id="GO:0006096">
    <property type="term" value="P:glycolytic process"/>
    <property type="evidence" value="ECO:0000314"/>
    <property type="project" value="SGD"/>
</dbReference>
<dbReference type="GO" id="GO:0001678">
    <property type="term" value="P:intracellular glucose homeostasis"/>
    <property type="evidence" value="ECO:0000318"/>
    <property type="project" value="GO_Central"/>
</dbReference>
<dbReference type="GO" id="GO:0006013">
    <property type="term" value="P:mannose metabolic process"/>
    <property type="evidence" value="ECO:0000314"/>
    <property type="project" value="SGD"/>
</dbReference>
<dbReference type="CDD" id="cd24088">
    <property type="entry name" value="ASKHA_NBD_GLK1-2_fungi"/>
    <property type="match status" value="1"/>
</dbReference>
<dbReference type="FunFam" id="3.30.420.40:FF:000034">
    <property type="entry name" value="Phosphotransferase"/>
    <property type="match status" value="1"/>
</dbReference>
<dbReference type="FunFam" id="3.40.367.20:FF:000006">
    <property type="entry name" value="Phosphotransferase"/>
    <property type="match status" value="1"/>
</dbReference>
<dbReference type="Gene3D" id="3.30.420.40">
    <property type="match status" value="1"/>
</dbReference>
<dbReference type="Gene3D" id="3.40.367.20">
    <property type="match status" value="1"/>
</dbReference>
<dbReference type="InterPro" id="IPR043129">
    <property type="entry name" value="ATPase_NBD"/>
</dbReference>
<dbReference type="InterPro" id="IPR001312">
    <property type="entry name" value="Hexokinase"/>
</dbReference>
<dbReference type="InterPro" id="IPR019807">
    <property type="entry name" value="Hexokinase_BS"/>
</dbReference>
<dbReference type="InterPro" id="IPR022673">
    <property type="entry name" value="Hexokinase_C"/>
</dbReference>
<dbReference type="InterPro" id="IPR022672">
    <property type="entry name" value="Hexokinase_N"/>
</dbReference>
<dbReference type="PANTHER" id="PTHR19443:SF30">
    <property type="entry name" value="GLUCOKINASE-1-RELATED"/>
    <property type="match status" value="1"/>
</dbReference>
<dbReference type="PANTHER" id="PTHR19443">
    <property type="entry name" value="HEXOKINASE"/>
    <property type="match status" value="1"/>
</dbReference>
<dbReference type="Pfam" id="PF00349">
    <property type="entry name" value="Hexokinase_1"/>
    <property type="match status" value="1"/>
</dbReference>
<dbReference type="Pfam" id="PF03727">
    <property type="entry name" value="Hexokinase_2"/>
    <property type="match status" value="1"/>
</dbReference>
<dbReference type="PRINTS" id="PR00475">
    <property type="entry name" value="HEXOKINASE"/>
</dbReference>
<dbReference type="SUPFAM" id="SSF53067">
    <property type="entry name" value="Actin-like ATPase domain"/>
    <property type="match status" value="2"/>
</dbReference>
<dbReference type="PROSITE" id="PS00378">
    <property type="entry name" value="HEXOKINASE_1"/>
    <property type="match status" value="1"/>
</dbReference>
<dbReference type="PROSITE" id="PS51748">
    <property type="entry name" value="HEXOKINASE_2"/>
    <property type="match status" value="1"/>
</dbReference>
<protein>
    <recommendedName>
        <fullName>Glucokinase-1</fullName>
        <ecNumber evidence="6">2.7.1.2</ecNumber>
    </recommendedName>
    <alternativeName>
        <fullName>Glucose kinase 1</fullName>
        <shortName>GLK-1</shortName>
    </alternativeName>
</protein>
<proteinExistence type="evidence at protein level"/>
<organism>
    <name type="scientific">Saccharomyces cerevisiae (strain ATCC 204508 / S288c)</name>
    <name type="common">Baker's yeast</name>
    <dbReference type="NCBI Taxonomy" id="559292"/>
    <lineage>
        <taxon>Eukaryota</taxon>
        <taxon>Fungi</taxon>
        <taxon>Dikarya</taxon>
        <taxon>Ascomycota</taxon>
        <taxon>Saccharomycotina</taxon>
        <taxon>Saccharomycetes</taxon>
        <taxon>Saccharomycetales</taxon>
        <taxon>Saccharomycetaceae</taxon>
        <taxon>Saccharomyces</taxon>
    </lineage>
</organism>
<gene>
    <name type="primary">GLK1</name>
    <name type="synonym">HOR3</name>
    <name type="ordered locus">YCL040W</name>
    <name type="ORF">YCL312</name>
    <name type="ORF">YCL40W</name>
</gene>
<feature type="initiator methionine" description="Removed" evidence="7 9">
    <location>
        <position position="1"/>
    </location>
</feature>
<feature type="chain" id="PRO_0000197603" description="Glucokinase-1">
    <location>
        <begin position="2"/>
        <end position="500"/>
    </location>
</feature>
<feature type="domain" description="Hexokinase" evidence="2">
    <location>
        <begin position="12"/>
        <end position="498"/>
    </location>
</feature>
<feature type="region of interest" description="Hexokinase small subdomain" evidence="2">
    <location>
        <begin position="74"/>
        <end position="216"/>
    </location>
</feature>
<feature type="region of interest" description="Glucose-binding" evidence="1">
    <location>
        <begin position="158"/>
        <end position="184"/>
    </location>
</feature>
<feature type="region of interest" description="Hexokinase large subdomain" evidence="2">
    <location>
        <begin position="217"/>
        <end position="487"/>
    </location>
</feature>
<feature type="binding site" evidence="1">
    <location>
        <position position="110"/>
    </location>
    <ligand>
        <name>ATP</name>
        <dbReference type="ChEBI" id="CHEBI:30616"/>
    </ligand>
</feature>
<feature type="binding site" evidence="1">
    <location>
        <begin position="487"/>
        <end position="492"/>
    </location>
    <ligand>
        <name>ATP</name>
        <dbReference type="ChEBI" id="CHEBI:30616"/>
    </ligand>
</feature>
<feature type="modified residue" description="N-acetylserine" evidence="7 9">
    <location>
        <position position="2"/>
    </location>
</feature>
<feature type="modified residue" description="Phosphoserine" evidence="7">
    <location>
        <position position="2"/>
    </location>
</feature>
<feature type="modified residue" description="Phosphoserine" evidence="8">
    <location>
        <position position="470"/>
    </location>
</feature>
<evidence type="ECO:0000255" key="1"/>
<evidence type="ECO:0000255" key="2">
    <source>
        <dbReference type="PROSITE-ProRule" id="PRU01084"/>
    </source>
</evidence>
<evidence type="ECO:0000269" key="3">
    <source>
    </source>
</evidence>
<evidence type="ECO:0000269" key="4">
    <source>
    </source>
</evidence>
<evidence type="ECO:0000305" key="5"/>
<evidence type="ECO:0000305" key="6">
    <source>
    </source>
</evidence>
<evidence type="ECO:0007744" key="7">
    <source>
    </source>
</evidence>
<evidence type="ECO:0007744" key="8">
    <source>
    </source>
</evidence>
<evidence type="ECO:0007744" key="9">
    <source>
    </source>
</evidence>
<keyword id="KW-0002">3D-structure</keyword>
<keyword id="KW-0007">Acetylation</keyword>
<keyword id="KW-0067">ATP-binding</keyword>
<keyword id="KW-0324">Glycolysis</keyword>
<keyword id="KW-0418">Kinase</keyword>
<keyword id="KW-0547">Nucleotide-binding</keyword>
<keyword id="KW-0597">Phosphoprotein</keyword>
<keyword id="KW-1185">Reference proteome</keyword>
<keyword id="KW-0808">Transferase</keyword>
<accession>P17709</accession>
<accession>D6VQX5</accession>
<reference key="1">
    <citation type="journal article" date="1988" name="Gene">
        <title>Structure of yeast glucokinase, a strongly diverged specific aldo-hexose-phosphorylating isoenzyme.</title>
        <authorList>
            <person name="Albig W."/>
            <person name="Entian K.-D."/>
        </authorList>
    </citation>
    <scope>NUCLEOTIDE SEQUENCE [GENOMIC DNA]</scope>
    <scope>FUNCTION</scope>
    <scope>CATALYTIC ACTIVITY</scope>
</reference>
<reference key="2">
    <citation type="journal article" date="1992" name="Yeast">
        <title>The complete sequence of a 9,543 bp segment on the left arm of chromosome III reveals five open reading frames including glucokinase and the protein disulfide isomerase.</title>
        <authorList>
            <person name="Scherens B."/>
            <person name="Messenguy F."/>
            <person name="Gigot D."/>
            <person name="Dubois E."/>
        </authorList>
    </citation>
    <scope>NUCLEOTIDE SEQUENCE [GENOMIC DNA]</scope>
</reference>
<reference key="3">
    <citation type="journal article" date="1992" name="Nature">
        <title>The complete DNA sequence of yeast chromosome III.</title>
        <authorList>
            <person name="Oliver S.G."/>
            <person name="van der Aart Q.J.M."/>
            <person name="Agostoni-Carbone M.L."/>
            <person name="Aigle M."/>
            <person name="Alberghina L."/>
            <person name="Alexandraki D."/>
            <person name="Antoine G."/>
            <person name="Anwar R."/>
            <person name="Ballesta J.P.G."/>
            <person name="Benit P."/>
            <person name="Berben G."/>
            <person name="Bergantino E."/>
            <person name="Biteau N."/>
            <person name="Bolle P.-A."/>
            <person name="Bolotin-Fukuhara M."/>
            <person name="Brown A."/>
            <person name="Brown A.J.P."/>
            <person name="Buhler J.-M."/>
            <person name="Carcano C."/>
            <person name="Carignani G."/>
            <person name="Cederberg H."/>
            <person name="Chanet R."/>
            <person name="Contreras R."/>
            <person name="Crouzet M."/>
            <person name="Daignan-Fornier B."/>
            <person name="Defoor E."/>
            <person name="Delgado M.D."/>
            <person name="Demolder J."/>
            <person name="Doira C."/>
            <person name="Dubois E."/>
            <person name="Dujon B."/>
            <person name="Duesterhoeft A."/>
            <person name="Erdmann D."/>
            <person name="Esteban M."/>
            <person name="Fabre F."/>
            <person name="Fairhead C."/>
            <person name="Faye G."/>
            <person name="Feldmann H."/>
            <person name="Fiers W."/>
            <person name="Francingues-Gaillard M.-C."/>
            <person name="Franco L."/>
            <person name="Frontali L."/>
            <person name="Fukuhara H."/>
            <person name="Fuller L.J."/>
            <person name="Galland P."/>
            <person name="Gent M.E."/>
            <person name="Gigot D."/>
            <person name="Gilliquet V."/>
            <person name="Glansdorff N."/>
            <person name="Goffeau A."/>
            <person name="Grenson M."/>
            <person name="Grisanti P."/>
            <person name="Grivell L.A."/>
            <person name="de Haan M."/>
            <person name="Haasemann M."/>
            <person name="Hatat D."/>
            <person name="Hoenicka J."/>
            <person name="Hegemann J.H."/>
            <person name="Herbert C.J."/>
            <person name="Hilger F."/>
            <person name="Hohmann S."/>
            <person name="Hollenberg C.P."/>
            <person name="Huse K."/>
            <person name="Iborra F."/>
            <person name="Indge K.J."/>
            <person name="Isono K."/>
            <person name="Jacq C."/>
            <person name="Jacquet M."/>
            <person name="James C.M."/>
            <person name="Jauniaux J.-C."/>
            <person name="Jia Y."/>
            <person name="Jimenez A."/>
            <person name="Kelly A."/>
            <person name="Kleinhans U."/>
            <person name="Kreisl P."/>
            <person name="Lanfranchi G."/>
            <person name="Lewis C."/>
            <person name="van der Linden C.G."/>
            <person name="Lucchini G."/>
            <person name="Lutzenkirchen K."/>
            <person name="Maat M.J."/>
            <person name="Mallet L."/>
            <person name="Mannhaupt G."/>
            <person name="Martegani E."/>
            <person name="Mathieu A."/>
            <person name="Maurer C.T.C."/>
            <person name="McConnell D."/>
            <person name="McKee R.A."/>
            <person name="Messenguy F."/>
            <person name="Mewes H.-W."/>
            <person name="Molemans F."/>
            <person name="Montague M.A."/>
            <person name="Muzi Falconi M."/>
            <person name="Navas L."/>
            <person name="Newlon C.S."/>
            <person name="Noone D."/>
            <person name="Pallier C."/>
            <person name="Panzeri L."/>
            <person name="Pearson B.M."/>
            <person name="Perea J."/>
            <person name="Philippsen P."/>
            <person name="Pierard A."/>
            <person name="Planta R.J."/>
            <person name="Plevani P."/>
            <person name="Poetsch B."/>
            <person name="Pohl F.M."/>
            <person name="Purnelle B."/>
            <person name="Ramezani Rad M."/>
            <person name="Rasmussen S.W."/>
            <person name="Raynal A."/>
            <person name="Remacha M.A."/>
            <person name="Richterich P."/>
            <person name="Roberts A.B."/>
            <person name="Rodriguez F."/>
            <person name="Sanz E."/>
            <person name="Schaaff-Gerstenschlaeger I."/>
            <person name="Scherens B."/>
            <person name="Schweitzer B."/>
            <person name="Shu Y."/>
            <person name="Skala J."/>
            <person name="Slonimski P.P."/>
            <person name="Sor F."/>
            <person name="Soustelle C."/>
            <person name="Spiegelberg R."/>
            <person name="Stateva L.I."/>
            <person name="Steensma H.Y."/>
            <person name="Steiner S."/>
            <person name="Thierry A."/>
            <person name="Thireos G."/>
            <person name="Tzermia M."/>
            <person name="Urrestarazu L.A."/>
            <person name="Valle G."/>
            <person name="Vetter I."/>
            <person name="van Vliet-Reedijk J.C."/>
            <person name="Voet M."/>
            <person name="Volckaert G."/>
            <person name="Vreken P."/>
            <person name="Wang H."/>
            <person name="Warmington J.R."/>
            <person name="von Wettstein D."/>
            <person name="Wicksteed B.L."/>
            <person name="Wilson C."/>
            <person name="Wurst H."/>
            <person name="Xu G."/>
            <person name="Yoshikawa A."/>
            <person name="Zimmermann F.K."/>
            <person name="Sgouros J.G."/>
        </authorList>
    </citation>
    <scope>NUCLEOTIDE SEQUENCE [LARGE SCALE GENOMIC DNA]</scope>
    <source>
        <strain>ATCC 204508 / S288c</strain>
    </source>
</reference>
<reference key="4">
    <citation type="journal article" date="2014" name="G3 (Bethesda)">
        <title>The reference genome sequence of Saccharomyces cerevisiae: Then and now.</title>
        <authorList>
            <person name="Engel S.R."/>
            <person name="Dietrich F.S."/>
            <person name="Fisk D.G."/>
            <person name="Binkley G."/>
            <person name="Balakrishnan R."/>
            <person name="Costanzo M.C."/>
            <person name="Dwight S.S."/>
            <person name="Hitz B.C."/>
            <person name="Karra K."/>
            <person name="Nash R.S."/>
            <person name="Weng S."/>
            <person name="Wong E.D."/>
            <person name="Lloyd P."/>
            <person name="Skrzypek M.S."/>
            <person name="Miyasato S.R."/>
            <person name="Simison M."/>
            <person name="Cherry J.M."/>
        </authorList>
    </citation>
    <scope>GENOME REANNOTATION</scope>
    <source>
        <strain>ATCC 204508 / S288c</strain>
    </source>
</reference>
<reference key="5">
    <citation type="journal article" date="2003" name="Nature">
        <title>Global analysis of protein expression in yeast.</title>
        <authorList>
            <person name="Ghaemmaghami S."/>
            <person name="Huh W.-K."/>
            <person name="Bower K."/>
            <person name="Howson R.W."/>
            <person name="Belle A."/>
            <person name="Dephoure N."/>
            <person name="O'Shea E.K."/>
            <person name="Weissman J.S."/>
        </authorList>
    </citation>
    <scope>LEVEL OF PROTEIN EXPRESSION [LARGE SCALE ANALYSIS]</scope>
</reference>
<reference key="6">
    <citation type="journal article" date="2005" name="Mol. Cell. Proteomics">
        <title>Quantitative phosphoproteomics applied to the yeast pheromone signaling pathway.</title>
        <authorList>
            <person name="Gruhler A."/>
            <person name="Olsen J.V."/>
            <person name="Mohammed S."/>
            <person name="Mortensen P."/>
            <person name="Faergeman N.J."/>
            <person name="Mann M."/>
            <person name="Jensen O.N."/>
        </authorList>
    </citation>
    <scope>ACETYLATION [LARGE SCALE ANALYSIS] AT SER-2</scope>
    <scope>PHOSPHORYLATION [LARGE SCALE ANALYSIS] AT SER-2</scope>
    <scope>CLEAVAGE OF INITIATOR METHIONINE [LARGE SCALE ANALYSIS]</scope>
    <scope>IDENTIFICATION BY MASS SPECTROMETRY [LARGE SCALE ANALYSIS]</scope>
    <source>
        <strain>YAL6B</strain>
    </source>
</reference>
<reference key="7">
    <citation type="journal article" date="2008" name="Mol. Cell. Proteomics">
        <title>A multidimensional chromatography technology for in-depth phosphoproteome analysis.</title>
        <authorList>
            <person name="Albuquerque C.P."/>
            <person name="Smolka M.B."/>
            <person name="Payne S.H."/>
            <person name="Bafna V."/>
            <person name="Eng J."/>
            <person name="Zhou H."/>
        </authorList>
    </citation>
    <scope>PHOSPHORYLATION [LARGE SCALE ANALYSIS] AT SER-470</scope>
    <scope>IDENTIFICATION BY MASS SPECTROMETRY [LARGE SCALE ANALYSIS]</scope>
</reference>
<reference key="8">
    <citation type="journal article" date="2012" name="Proc. Natl. Acad. Sci. U.S.A.">
        <title>N-terminal acetylome analyses and functional insights of the N-terminal acetyltransferase NatB.</title>
        <authorList>
            <person name="Van Damme P."/>
            <person name="Lasa M."/>
            <person name="Polevoda B."/>
            <person name="Gazquez C."/>
            <person name="Elosegui-Artola A."/>
            <person name="Kim D.S."/>
            <person name="De Juan-Pardo E."/>
            <person name="Demeyer K."/>
            <person name="Hole K."/>
            <person name="Larrea E."/>
            <person name="Timmerman E."/>
            <person name="Prieto J."/>
            <person name="Arnesen T."/>
            <person name="Sherman F."/>
            <person name="Gevaert K."/>
            <person name="Aldabe R."/>
        </authorList>
    </citation>
    <scope>ACETYLATION [LARGE SCALE ANALYSIS] AT SER-2</scope>
    <scope>CLEAVAGE OF INITIATOR METHIONINE [LARGE SCALE ANALYSIS]</scope>
    <scope>IDENTIFICATION BY MASS SPECTROMETRY [LARGE SCALE ANALYSIS]</scope>
</reference>
<comment type="function">
    <text evidence="4">Two isoenzymes, hexokinase-1 and hexokinase-2, can phosphorylate keto- and aldohexoses in yeast, whereas a third isoenzyme, GLK, is specific for aldohexoses. All glucose phosphorylating enzymes are involved in glucose uptake.</text>
</comment>
<comment type="catalytic activity">
    <reaction evidence="6">
        <text>D-glucose + ATP = D-glucose 6-phosphate + ADP + H(+)</text>
        <dbReference type="Rhea" id="RHEA:17825"/>
        <dbReference type="ChEBI" id="CHEBI:4167"/>
        <dbReference type="ChEBI" id="CHEBI:15378"/>
        <dbReference type="ChEBI" id="CHEBI:30616"/>
        <dbReference type="ChEBI" id="CHEBI:61548"/>
        <dbReference type="ChEBI" id="CHEBI:456216"/>
        <dbReference type="EC" id="2.7.1.2"/>
    </reaction>
    <physiologicalReaction direction="left-to-right" evidence="6">
        <dbReference type="Rhea" id="RHEA:17826"/>
    </physiologicalReaction>
</comment>
<comment type="pathway">
    <text evidence="4">Carbohydrate metabolism; hexose metabolism.</text>
</comment>
<comment type="pathway">
    <text evidence="4">Carbohydrate degradation; glycolysis; D-glyceraldehyde 3-phosphate and glycerone phosphate from D-glucose: step 1/4.</text>
</comment>
<comment type="subunit">
    <text>Monomer.</text>
</comment>
<comment type="interaction">
    <interactant intactId="EBI-8744">
        <id>P17709</id>
    </interactant>
    <interactant intactId="EBI-38225">
        <id>Q04409</id>
        <label>EMI2</label>
    </interactant>
    <organismsDiffer>false</organismsDiffer>
    <experiments>3</experiments>
</comment>
<comment type="miscellaneous">
    <text evidence="3">Present with 21100 molecules/cell in log phase SD medium.</text>
</comment>
<comment type="similarity">
    <text evidence="2 5">Belongs to the hexokinase family.</text>
</comment>
<sequence>MSFDDLHKATERAVIQAVDQICDDFEVTPEKLDELTAYFIEQMEKGLAPPKEGHTLASDKGLPMIPAFVTGSPNGTERGVLLAADLGGTNFRICSVNLHGDHTFSMEQMKSKIPDDLLDDENVTSDDLFGFLARRTLAFMKKYHPDELAKGKDAKPMKLGFTFSYPVDQTSLNSGTLIRWTKGFRIADTVGKDVVQLYQEQLSAQGMPMIKVVALTNDTVGTYLSHCYTSDNTDSMTSGEISEPVIGCIFGTGTNGCYMEEINKITKLPQELRDKLIKEGKTHMIINVEWGSFDNELKHLPTTKYDVVIDQKLSTNPGFHLFEKRVSGMFLGEVLRNILVDLHSQGLLLQQYRSKEQLPRHLTTPFQLSSEVLSHIEIDDSTGLRETELSLLQSLRLPTTPTERVQIQKLVRAISRRSAYLAAVPLAAILIKTNALNKRYHGEVEIGCDGSVVEYYPGFRSMLRHALALSPLGAEGERKVHLKIAKDGSGVGAALCALVA</sequence>
<name>HXKG_YEAST</name>